<dbReference type="EMBL" id="K02308">
    <property type="protein sequence ID" value="AAA49991.1"/>
    <property type="molecule type" value="mRNA"/>
</dbReference>
<dbReference type="EMBL" id="M18682">
    <property type="protein sequence ID" value="AAA49992.1"/>
    <property type="molecule type" value="mRNA"/>
</dbReference>
<dbReference type="EMBL" id="X13393">
    <property type="protein sequence ID" value="CAA31763.1"/>
    <property type="molecule type" value="Genomic_DNA"/>
</dbReference>
<dbReference type="EMBL" id="X13394">
    <property type="protein sequence ID" value="CAA31763.1"/>
    <property type="status" value="JOINED"/>
    <property type="molecule type" value="Genomic_DNA"/>
</dbReference>
<dbReference type="EMBL" id="X13395">
    <property type="protein sequence ID" value="CAA31763.1"/>
    <property type="status" value="JOINED"/>
    <property type="molecule type" value="Genomic_DNA"/>
</dbReference>
<dbReference type="PIR" id="A27785">
    <property type="entry name" value="A27785"/>
</dbReference>
<dbReference type="RefSeq" id="NP_001079056.1">
    <property type="nucleotide sequence ID" value="NM_001085587.1"/>
</dbReference>
<dbReference type="TCDB" id="1.C.16.1.3">
    <property type="family name" value="the magainin (magainin) family"/>
</dbReference>
<dbReference type="GeneID" id="373587"/>
<dbReference type="KEGG" id="xla:373587"/>
<dbReference type="AGR" id="Xenbase:XB-GENE-6253058"/>
<dbReference type="CTD" id="373587"/>
<dbReference type="Xenbase" id="XB-GENE-6253058">
    <property type="gene designation" value="levi.L"/>
</dbReference>
<dbReference type="Proteomes" id="UP000186698">
    <property type="component" value="Chromosome 6L"/>
</dbReference>
<dbReference type="Bgee" id="373587">
    <property type="expression patterns" value="Expressed in zone of skin and 10 other cell types or tissues"/>
</dbReference>
<dbReference type="GO" id="GO:0005576">
    <property type="term" value="C:extracellular region"/>
    <property type="evidence" value="ECO:0007669"/>
    <property type="project" value="UniProtKB-SubCell"/>
</dbReference>
<dbReference type="GO" id="GO:0002777">
    <property type="term" value="P:antimicrobial peptide biosynthetic process"/>
    <property type="evidence" value="ECO:0000304"/>
    <property type="project" value="Xenbase"/>
</dbReference>
<dbReference type="GO" id="GO:0097746">
    <property type="term" value="P:blood vessel diameter maintenance"/>
    <property type="evidence" value="ECO:0007669"/>
    <property type="project" value="UniProtKB-KW"/>
</dbReference>
<dbReference type="GO" id="GO:0042742">
    <property type="term" value="P:defense response to bacterium"/>
    <property type="evidence" value="ECO:0007669"/>
    <property type="project" value="UniProtKB-KW"/>
</dbReference>
<dbReference type="GO" id="GO:0045087">
    <property type="term" value="P:innate immune response"/>
    <property type="evidence" value="ECO:0000304"/>
    <property type="project" value="Xenbase"/>
</dbReference>
<protein>
    <recommendedName>
        <fullName>Xenopsin peptides</fullName>
    </recommendedName>
    <component>
        <recommendedName>
            <fullName>Xenopsin precursor fragment</fullName>
            <shortName>XPF</shortName>
        </recommendedName>
    </component>
    <component>
        <recommendedName>
            <fullName>Xenopsin</fullName>
        </recommendedName>
    </component>
</protein>
<accession>P07198</accession>
<organism>
    <name type="scientific">Xenopus laevis</name>
    <name type="common">African clawed frog</name>
    <dbReference type="NCBI Taxonomy" id="8355"/>
    <lineage>
        <taxon>Eukaryota</taxon>
        <taxon>Metazoa</taxon>
        <taxon>Chordata</taxon>
        <taxon>Craniata</taxon>
        <taxon>Vertebrata</taxon>
        <taxon>Euteleostomi</taxon>
        <taxon>Amphibia</taxon>
        <taxon>Batrachia</taxon>
        <taxon>Anura</taxon>
        <taxon>Pipoidea</taxon>
        <taxon>Pipidae</taxon>
        <taxon>Xenopodinae</taxon>
        <taxon>Xenopus</taxon>
        <taxon>Xenopus</taxon>
    </lineage>
</organism>
<sequence>MYKGIFLCVLLAVICANSLATPSSDADEDNDEVERYVRGWASKIGQTLGKIAKVGLKELIQPKREAMLRSAEAQGKRPWIL</sequence>
<comment type="function">
    <text>Xenopsin is a neurotensin-like octapeptide.</text>
</comment>
<comment type="function">
    <text>XPF has antimicrobial activity.</text>
</comment>
<comment type="subcellular location">
    <subcellularLocation>
        <location>Secreted</location>
    </subcellularLocation>
</comment>
<comment type="tissue specificity">
    <text>XPF is synthesized in the stomach and stored in a novel granular multinucleated cell in the gastric mucosa, it is stored as active, processed peptides in large granules within the granular gland secretions of the skin.</text>
</comment>
<comment type="similarity">
    <text evidence="2">Belongs to the gastrin/cholecystokinin family. Magainin subfamily.</text>
</comment>
<reference key="1">
    <citation type="journal article" date="1984" name="Proc. Natl. Acad. Sci. U.S.A.">
        <title>Xenopsin: the neurotensin-like octapeptide from Xenopus skin at the carboxyl terminus of its precursor.</title>
        <authorList>
            <person name="Sures I."/>
            <person name="Crippa M."/>
        </authorList>
    </citation>
    <scope>NUCLEOTIDE SEQUENCE [MRNA]</scope>
    <source>
        <tissue>Skin</tissue>
    </source>
</reference>
<reference key="2">
    <citation type="journal article" date="1988" name="J. Biol. Chem.">
        <title>Levitide, a neurohormone-like peptide from the skin of Xenopus laevis. Peptide and peptide precursor cDNA sequences.</title>
        <authorList>
            <person name="Poulter L."/>
            <person name="Terry A.S."/>
            <person name="Williams D.H."/>
            <person name="Giovannini M.G."/>
            <person name="Moore C.H."/>
            <person name="Gibson B.W."/>
        </authorList>
    </citation>
    <scope>NUCLEOTIDE SEQUENCE [MRNA]</scope>
    <source>
        <tissue>Skin</tissue>
    </source>
</reference>
<reference key="3">
    <citation type="journal article" date="1989" name="Eur. J. Biochem.">
        <title>The genes for the frog skin peptides GLa, xenopsin, levitide and caerulein contain a homologous export exon encoding a signal sequence and part of an amphiphilic peptide.</title>
        <authorList>
            <person name="Kuchler K."/>
            <person name="Kreil G."/>
            <person name="Sures I."/>
        </authorList>
    </citation>
    <scope>NUCLEOTIDE SEQUENCE [GENOMIC DNA]</scope>
</reference>
<reference key="4">
    <citation type="journal article" date="1991" name="J. Biol. Chem.">
        <title>Antimicrobial peptides in the stomach of Xenopus laevis.</title>
        <authorList>
            <person name="Moore K.S."/>
            <person name="Bevins C.L."/>
            <person name="Brasseur M.M."/>
            <person name="Tomassini N."/>
            <person name="Turner K."/>
            <person name="Eck H."/>
            <person name="Zasloff M."/>
        </authorList>
    </citation>
    <scope>PROTEIN SEQUENCE OF 39-63</scope>
    <source>
        <tissue>Stomach</tissue>
    </source>
</reference>
<reference key="5">
    <citation type="journal article" date="1973" name="Chem. Pharm. Bull.">
        <title>Isolation and structure of a new active peptide 'Xenopsin' on the smooth muscle, especially on a strip of fundus from a rat stomach, from the skin of Xenopus laevis.</title>
        <authorList>
            <person name="Araki K."/>
            <person name="Tachibana S."/>
            <person name="Uchiyama M."/>
            <person name="Yasuhara T."/>
        </authorList>
    </citation>
    <scope>PROTEIN SEQUENCE OF 74-81</scope>
</reference>
<proteinExistence type="evidence at protein level"/>
<evidence type="ECO:0000269" key="1">
    <source>
    </source>
</evidence>
<evidence type="ECO:0000305" key="2"/>
<keyword id="KW-0044">Antibiotic</keyword>
<keyword id="KW-0929">Antimicrobial</keyword>
<keyword id="KW-0165">Cleavage on pair of basic residues</keyword>
<keyword id="KW-0903">Direct protein sequencing</keyword>
<keyword id="KW-1185">Reference proteome</keyword>
<keyword id="KW-0964">Secreted</keyword>
<keyword id="KW-0732">Signal</keyword>
<keyword id="KW-0838">Vasoactive</keyword>
<feature type="signal peptide">
    <location>
        <begin position="1"/>
        <end position="20"/>
    </location>
</feature>
<feature type="propeptide" id="PRO_0000010706">
    <location>
        <begin position="21"/>
        <end position="37"/>
    </location>
</feature>
<feature type="peptide" id="PRO_0000010707" description="Xenopsin precursor fragment">
    <location>
        <begin position="39"/>
        <end position="63"/>
    </location>
</feature>
<feature type="propeptide" id="PRO_0000010708" description="Removed in mature form by a dipeptidylpeptidase" evidence="1">
    <location>
        <begin position="65"/>
        <end position="73"/>
    </location>
</feature>
<feature type="peptide" id="PRO_0000010709" description="Xenopsin">
    <location>
        <begin position="74"/>
        <end position="81"/>
    </location>
</feature>
<name>XENO_XENLA</name>